<comment type="catalytic activity">
    <reaction>
        <text>Random hydrolysis of (1-&gt;4)-beta-D-mannosidic linkages in mannans, galactomannans and glucomannans.</text>
        <dbReference type="EC" id="3.2.1.78"/>
    </reaction>
</comment>
<comment type="subcellular location">
    <subcellularLocation>
        <location evidence="6">Secreted</location>
    </subcellularLocation>
</comment>
<comment type="developmental stage">
    <text evidence="3 4">Expressed in lateral endosperm after radicle emergence (72 hours germinated seeds). Expressed in fruit pericarp during the early stages of ripening.</text>
</comment>
<comment type="similarity">
    <text evidence="6">Belongs to the glycosyl hydrolase 5 (cellulase A) family.</text>
</comment>
<dbReference type="EC" id="3.2.1.78"/>
<dbReference type="EMBL" id="AF017144">
    <property type="protein sequence ID" value="AAB87859.2"/>
    <property type="molecule type" value="mRNA"/>
</dbReference>
<dbReference type="PIR" id="T04323">
    <property type="entry name" value="T04323"/>
</dbReference>
<dbReference type="RefSeq" id="NP_001234575.1">
    <property type="nucleotide sequence ID" value="NM_001247646.1"/>
</dbReference>
<dbReference type="SMR" id="O48540"/>
<dbReference type="STRING" id="4081.O48540"/>
<dbReference type="CAZy" id="GH5">
    <property type="family name" value="Glycoside Hydrolase Family 5"/>
</dbReference>
<dbReference type="PaxDb" id="4081-Solyc00g231680.1.1"/>
<dbReference type="EnsemblPlants" id="Solyc00g231680.2.1">
    <property type="protein sequence ID" value="Solyc00g231680.2.1"/>
    <property type="gene ID" value="Solyc00g231680.2"/>
</dbReference>
<dbReference type="GeneID" id="544199"/>
<dbReference type="Gramene" id="Solyc00g231680.2.1">
    <property type="protein sequence ID" value="Solyc00g231680.2.1"/>
    <property type="gene ID" value="Solyc00g231680.2"/>
</dbReference>
<dbReference type="KEGG" id="sly:544199"/>
<dbReference type="eggNOG" id="ENOG502QTAQ">
    <property type="taxonomic scope" value="Eukaryota"/>
</dbReference>
<dbReference type="InParanoid" id="O48540"/>
<dbReference type="OrthoDB" id="406631at2759"/>
<dbReference type="Proteomes" id="UP000004994">
    <property type="component" value="Unassembled WGS sequence"/>
</dbReference>
<dbReference type="ExpressionAtlas" id="O48540">
    <property type="expression patterns" value="baseline"/>
</dbReference>
<dbReference type="GO" id="GO:0005576">
    <property type="term" value="C:extracellular region"/>
    <property type="evidence" value="ECO:0007669"/>
    <property type="project" value="UniProtKB-SubCell"/>
</dbReference>
<dbReference type="GO" id="GO:0016985">
    <property type="term" value="F:mannan endo-1,4-beta-mannosidase activity"/>
    <property type="evidence" value="ECO:0000318"/>
    <property type="project" value="GO_Central"/>
</dbReference>
<dbReference type="GO" id="GO:0000272">
    <property type="term" value="P:polysaccharide catabolic process"/>
    <property type="evidence" value="ECO:0007669"/>
    <property type="project" value="InterPro"/>
</dbReference>
<dbReference type="FunFam" id="3.20.20.80:FF:000012">
    <property type="entry name" value="Mannan endo-1,4-beta-mannosidase 6"/>
    <property type="match status" value="1"/>
</dbReference>
<dbReference type="Gene3D" id="3.20.20.80">
    <property type="entry name" value="Glycosidases"/>
    <property type="match status" value="1"/>
</dbReference>
<dbReference type="InterPro" id="IPR001547">
    <property type="entry name" value="Glyco_hydro_5"/>
</dbReference>
<dbReference type="InterPro" id="IPR017853">
    <property type="entry name" value="Glycoside_hydrolase_SF"/>
</dbReference>
<dbReference type="InterPro" id="IPR045053">
    <property type="entry name" value="MAN-like"/>
</dbReference>
<dbReference type="PANTHER" id="PTHR31451">
    <property type="match status" value="1"/>
</dbReference>
<dbReference type="PANTHER" id="PTHR31451:SF55">
    <property type="entry name" value="MANNAN ENDO-1,4-BETA-MANNOSIDASE 1"/>
    <property type="match status" value="1"/>
</dbReference>
<dbReference type="Pfam" id="PF00150">
    <property type="entry name" value="Cellulase"/>
    <property type="match status" value="1"/>
</dbReference>
<dbReference type="SUPFAM" id="SSF51445">
    <property type="entry name" value="(Trans)glycosidases"/>
    <property type="match status" value="1"/>
</dbReference>
<keyword id="KW-0903">Direct protein sequencing</keyword>
<keyword id="KW-0326">Glycosidase</keyword>
<keyword id="KW-0378">Hydrolase</keyword>
<keyword id="KW-1185">Reference proteome</keyword>
<keyword id="KW-0964">Secreted</keyword>
<keyword id="KW-0732">Signal</keyword>
<sequence length="397" mass="44804">MSYARRSCICGLFLLFLALVCEANSGFIGVKDSHFELNGSPFLFNGFNSYWLMHVAADPTERYKVTEVLKDASVAGLSVCRTWAFSDGGDRALQISPGIYDERVFQGLDFVIAEAKKYGIRLILSFVNQWNDFGGKAQYVWWARNAGAQISNDDEFYTHPMLKKYLKNHIEKVVTRLNSITKVAYKDDPTIMAWELMNEPRDQADYSGKTVNGWVQEMASFVKSLDNKHLLEVGMEGFYGDSIPERKSVNPGYQVGTDFISNHLINEIDFATIHAYTDQWVSGQSDDAQLVWMEKWITSHWEDARNILKKPLVLAEFGKSSRGQGSRDIFMSSVYRNVYNLAKEGGTMAGSLVWQLMAHGMENYDDGYCIVLGQTPSTTQIISDQAHVMTALARSLN</sequence>
<organism>
    <name type="scientific">Solanum lycopersicum</name>
    <name type="common">Tomato</name>
    <name type="synonym">Lycopersicon esculentum</name>
    <dbReference type="NCBI Taxonomy" id="4081"/>
    <lineage>
        <taxon>Eukaryota</taxon>
        <taxon>Viridiplantae</taxon>
        <taxon>Streptophyta</taxon>
        <taxon>Embryophyta</taxon>
        <taxon>Tracheophyta</taxon>
        <taxon>Spermatophyta</taxon>
        <taxon>Magnoliopsida</taxon>
        <taxon>eudicotyledons</taxon>
        <taxon>Gunneridae</taxon>
        <taxon>Pentapetalae</taxon>
        <taxon>asterids</taxon>
        <taxon>lamiids</taxon>
        <taxon>Solanales</taxon>
        <taxon>Solanaceae</taxon>
        <taxon>Solanoideae</taxon>
        <taxon>Solaneae</taxon>
        <taxon>Solanum</taxon>
        <taxon>Solanum subgen. Lycopersicon</taxon>
    </lineage>
</organism>
<evidence type="ECO:0000250" key="1">
    <source>
        <dbReference type="UniProtKB" id="B4XC07"/>
    </source>
</evidence>
<evidence type="ECO:0000250" key="2">
    <source>
        <dbReference type="UniProtKB" id="Q99036"/>
    </source>
</evidence>
<evidence type="ECO:0000269" key="3">
    <source>
    </source>
</evidence>
<evidence type="ECO:0000269" key="4">
    <source>
    </source>
</evidence>
<evidence type="ECO:0000269" key="5">
    <source>
    </source>
</evidence>
<evidence type="ECO:0000305" key="6"/>
<feature type="signal peptide" evidence="5">
    <location>
        <begin position="1"/>
        <end position="23"/>
    </location>
</feature>
<feature type="chain" id="PRO_0000277491" description="Mannan endo-1,4-beta-mannosidase 1">
    <location>
        <begin position="24"/>
        <end position="397"/>
    </location>
</feature>
<feature type="active site" description="Proton donor" evidence="2">
    <location>
        <position position="199"/>
    </location>
</feature>
<feature type="active site" description="Nucleophile" evidence="2">
    <location>
        <position position="316"/>
    </location>
</feature>
<feature type="binding site" evidence="1">
    <location>
        <position position="83"/>
    </location>
    <ligand>
        <name>substrate</name>
    </ligand>
</feature>
<feature type="binding site" evidence="1">
    <location>
        <position position="198"/>
    </location>
    <ligand>
        <name>substrate</name>
    </ligand>
</feature>
<feature type="binding site" evidence="1">
    <location>
        <position position="276"/>
    </location>
    <ligand>
        <name>substrate</name>
    </ligand>
</feature>
<feature type="binding site" evidence="1">
    <location>
        <position position="354"/>
    </location>
    <ligand>
        <name>substrate</name>
    </ligand>
</feature>
<gene>
    <name type="primary">MAN1</name>
</gene>
<accession>O48540</accession>
<protein>
    <recommendedName>
        <fullName>Mannan endo-1,4-beta-mannosidase 1</fullName>
        <ecNumber>3.2.1.78</ecNumber>
    </recommendedName>
    <alternativeName>
        <fullName>Beta-mannanase 1</fullName>
    </alternativeName>
    <alternativeName>
        <fullName>Endo-beta-1,4-mannanase 1</fullName>
    </alternativeName>
    <alternativeName>
        <fullName>LeMAN1</fullName>
    </alternativeName>
</protein>
<reference key="1">
    <citation type="journal article" date="1997" name="Planta">
        <title>Molecular cloning of a cDNA encoding a (1--&gt;4)-beta-mannan endohydrolase from the seeds of germinated tomato (Lycopersicon esculentum).</title>
        <authorList>
            <person name="Bewley J.D."/>
            <person name="Burton R.A."/>
            <person name="Morohashi Y."/>
            <person name="Fincher G.B."/>
        </authorList>
    </citation>
    <scope>NUCLEOTIDE SEQUENCE [MRNA]</scope>
    <scope>PROTEIN SEQUENCE OF 24-88</scope>
    <source>
        <tissue>Seed</tissue>
    </source>
</reference>
<reference key="2">
    <citation type="journal article" date="2000" name="J. Exp. Bot.">
        <title>Endo-beta-mannanase activity increases in the skin and outer pericarp of tomato fruits during ripening.</title>
        <authorList>
            <person name="Bewley J.D."/>
            <person name="Banik M."/>
            <person name="Bourgault R."/>
            <person name="Feurtado J.A."/>
            <person name="Toorop P."/>
            <person name="Hilhorst H.W.M."/>
        </authorList>
    </citation>
    <scope>DEVELOPMENTAL STAGE</scope>
</reference>
<reference key="3">
    <citation type="journal article" date="2000" name="Plant Physiol.">
        <title>A germination-specific endo-beta-mannanase gene is expressed exclusively in the micropylar endosperm cap of tomato seeds.</title>
        <authorList>
            <person name="Nonogaki H."/>
            <person name="Gee O.H."/>
            <person name="Bradford K.J."/>
        </authorList>
    </citation>
    <scope>DEVELOPMENTAL STAGE</scope>
</reference>
<name>MAN1_SOLLC</name>
<proteinExistence type="evidence at protein level"/>